<accession>B6KEU8</accession>
<accession>B9PMW9</accession>
<accession>B9Q877</accession>
<accession>Q27914</accession>
<accession>Q8MWP7</accession>
<organism>
    <name type="scientific">Toxoplasma gondii</name>
    <dbReference type="NCBI Taxonomy" id="5811"/>
    <lineage>
        <taxon>Eukaryota</taxon>
        <taxon>Sar</taxon>
        <taxon>Alveolata</taxon>
        <taxon>Apicomplexa</taxon>
        <taxon>Conoidasida</taxon>
        <taxon>Coccidia</taxon>
        <taxon>Eucoccidiorida</taxon>
        <taxon>Eimeriorina</taxon>
        <taxon>Sarcocystidae</taxon>
        <taxon>Toxoplasma</taxon>
    </lineage>
</organism>
<name>GRA3_TOXGO</name>
<keyword id="KW-0963">Cytoplasm</keyword>
<keyword id="KW-1038">Host endoplasmic reticulum</keyword>
<keyword id="KW-0472">Membrane</keyword>
<keyword id="KW-0812">Transmembrane</keyword>
<keyword id="KW-1133">Transmembrane helix</keyword>
<protein>
    <recommendedName>
        <fullName evidence="8">Dense granule protein 3</fullName>
    </recommendedName>
    <alternativeName>
        <fullName evidence="6">P30</fullName>
    </alternativeName>
</protein>
<feature type="chain" id="PRO_0000398815" description="Dense granule protein 3">
    <location>
        <begin position="1"/>
        <end position="222"/>
    </location>
</feature>
<feature type="transmembrane region" description="Helical" evidence="1">
    <location>
        <begin position="22"/>
        <end position="42"/>
    </location>
</feature>
<feature type="transmembrane region" description="Helical" evidence="1">
    <location>
        <begin position="162"/>
        <end position="182"/>
    </location>
</feature>
<feature type="short sequence motif" description="Prevents secretion from ER" evidence="2">
    <location>
        <begin position="219"/>
        <end position="222"/>
    </location>
</feature>
<feature type="sequence conflict" description="In Ref. 5; AAC13772/AAC13773." evidence="7" ref="5">
    <original>G</original>
    <variation>C</variation>
    <location>
        <position position="80"/>
    </location>
</feature>
<proteinExistence type="evidence at protein level"/>
<dbReference type="EMBL" id="AF414079">
    <property type="protein sequence ID" value="AAN03693.1"/>
    <property type="molecule type" value="mRNA"/>
</dbReference>
<dbReference type="EMBL" id="EF552406">
    <property type="protein sequence ID" value="ABQ41276.1"/>
    <property type="molecule type" value="mRNA"/>
</dbReference>
<dbReference type="EMBL" id="U13771">
    <property type="protein sequence ID" value="AAC13772.1"/>
    <property type="status" value="ALT_SEQ"/>
    <property type="molecule type" value="mRNA"/>
</dbReference>
<dbReference type="EMBL" id="U13771">
    <property type="protein sequence ID" value="AAC13773.1"/>
    <property type="status" value="ALT_SEQ"/>
    <property type="molecule type" value="mRNA"/>
</dbReference>
<dbReference type="SMR" id="B6KEU8"/>
<dbReference type="VEuPathDB" id="ToxoDB:TGARI_227280"/>
<dbReference type="VEuPathDB" id="ToxoDB:TGCAST_227280"/>
<dbReference type="VEuPathDB" id="ToxoDB:TGCOUG_227280"/>
<dbReference type="VEuPathDB" id="ToxoDB:TGDOM2_227280"/>
<dbReference type="VEuPathDB" id="ToxoDB:TGFOU_227280"/>
<dbReference type="VEuPathDB" id="ToxoDB:TGGT1_227280"/>
<dbReference type="VEuPathDB" id="ToxoDB:TGMAS_227280"/>
<dbReference type="VEuPathDB" id="ToxoDB:TGME49_227280"/>
<dbReference type="VEuPathDB" id="ToxoDB:TGP89_227280"/>
<dbReference type="VEuPathDB" id="ToxoDB:TGPRC2_227280"/>
<dbReference type="VEuPathDB" id="ToxoDB:TGRH88_046790"/>
<dbReference type="VEuPathDB" id="ToxoDB:TGRUB_227280"/>
<dbReference type="VEuPathDB" id="ToxoDB:TGVAND_227280"/>
<dbReference type="VEuPathDB" id="ToxoDB:TGVEG_227280"/>
<dbReference type="GO" id="GO:0005737">
    <property type="term" value="C:cytoplasm"/>
    <property type="evidence" value="ECO:0007669"/>
    <property type="project" value="UniProtKB-SubCell"/>
</dbReference>
<dbReference type="GO" id="GO:0044165">
    <property type="term" value="C:host cell endoplasmic reticulum"/>
    <property type="evidence" value="ECO:0007669"/>
    <property type="project" value="UniProtKB-SubCell"/>
</dbReference>
<dbReference type="GO" id="GO:0016020">
    <property type="term" value="C:membrane"/>
    <property type="evidence" value="ECO:0007669"/>
    <property type="project" value="UniProtKB-KW"/>
</dbReference>
<dbReference type="GO" id="GO:0020005">
    <property type="term" value="C:symbiont-containing vacuole membrane"/>
    <property type="evidence" value="ECO:0007669"/>
    <property type="project" value="UniProtKB-SubCell"/>
</dbReference>
<reference evidence="7" key="1">
    <citation type="journal article" date="2005" name="Parasitology">
        <title>Toxoplasma gondii dense granule protein 3 (GRA3) is a type I transmembrane protein that possesses a cytoplasmic dilysine (KKXX) endoplasmic reticulum (ER) retrieval motif.</title>
        <authorList>
            <person name="Henriquez F.L."/>
            <person name="Nickdel M.B."/>
            <person name="McLeod R."/>
            <person name="Lyons R.E."/>
            <person name="Lyons K."/>
            <person name="Dubremetz J.F."/>
            <person name="Grigg M.E."/>
            <person name="Samuel B.U."/>
            <person name="Roberts C.W."/>
        </authorList>
    </citation>
    <scope>NUCLEOTIDE SEQUENCE [MRNA]</scope>
    <scope>SUBUNIT</scope>
    <scope>SUBCELLULAR LOCATION</scope>
    <scope>DOMAIN</scope>
    <source>
        <strain evidence="2">RH</strain>
    </source>
</reference>
<reference evidence="7" key="2">
    <citation type="journal article" date="2008" name="Korean J. Parasitol.">
        <title>Interaction between parasitophorous vacuolar membrane-associated GRA3 and calcium modulating ligand of host cell endoplasmic reticulum in the parasitism of Toxoplasma gondii.</title>
        <authorList>
            <person name="Kim J.Y."/>
            <person name="Ahn H.J."/>
            <person name="Ryu K.J."/>
            <person name="Nam H.W."/>
        </authorList>
    </citation>
    <scope>NUCLEOTIDE SEQUENCE [MRNA]</scope>
    <scope>FUNCTION</scope>
    <scope>INTERACTION WITH HOST CAMLG</scope>
    <scope>SUBCELLULAR LOCATION</scope>
    <source>
        <strain evidence="3">RH</strain>
        <tissue evidence="3">Tachyzoite</tissue>
    </source>
</reference>
<reference evidence="7 8" key="3">
    <citation type="submission" date="2001-08" db="EMBL/GenBank/DDBJ databases">
        <title>Identification and characterization of a Toxoplasma gondii protein with a N-terminal portion identical to GRA3.</title>
        <authorList>
            <person name="Henriquez F.L."/>
            <person name="Roberts C.W."/>
        </authorList>
    </citation>
    <scope>NUCLEOTIDE SEQUENCE [MRNA]</scope>
    <source>
        <strain evidence="8">RH</strain>
        <tissue evidence="8">Tachyzoite</tissue>
    </source>
</reference>
<reference evidence="7 8" key="4">
    <citation type="submission" date="2007-04" db="EMBL/GenBank/DDBJ databases">
        <title>Cloning and sequencing of the CRA3 gene from Toxoplasma gondii RH strain.</title>
        <authorList>
            <person name="Chen Y."/>
            <person name="Yu L."/>
            <person name="Zhang S."/>
        </authorList>
    </citation>
    <scope>NUCLEOTIDE SEQUENCE [MRNA]</scope>
    <source>
        <strain evidence="9">RH</strain>
        <tissue evidence="9">Tachyzoite</tissue>
    </source>
</reference>
<reference evidence="7" key="5">
    <citation type="journal article" date="1994" name="Mol. Biochem. Parasitol.">
        <title>Cloning of a cDNA encoding the dense granule protein GRA3 from Toxoplasma gondii.</title>
        <authorList>
            <person name="Bermudes D."/>
            <person name="Dubremetz J.-F."/>
            <person name="Achbarou A."/>
            <person name="Joiner K.A."/>
        </authorList>
    </citation>
    <scope>NUCLEOTIDE SEQUENCE [MRNA] OF 1-146</scope>
    <source>
        <strain evidence="4">RH</strain>
        <tissue evidence="4">Tachyzoite</tissue>
    </source>
</reference>
<comment type="function">
    <text evidence="3">Direct host-parasite interaction occurs at the cytoplasmic faces of the parasitophorous vacuole membrane (PVM) and the host endoplasmic reticulum (ER) membrane via GRA3 and host CAMLG association. Direct insertion of GRA3 ER retrieval motif into the host ER membrane contributes to the host ER recruitment to the PVM.</text>
</comment>
<comment type="subunit">
    <text evidence="2 3 7">Homodimer (Probable). Interacts (via N-terminus) with human host CAMLG (via N-terminus).</text>
</comment>
<comment type="subcellular location">
    <subcellularLocation>
        <location evidence="2 3">Cytoplasm</location>
    </subcellularLocation>
    <subcellularLocation>
        <location evidence="2 3">Host endoplasmic reticulum</location>
    </subcellularLocation>
    <subcellularLocation>
        <location evidence="1">Parasitophorous vacuole membrane</location>
        <topology evidence="1">Multi-pass membrane protein</topology>
    </subcellularLocation>
    <text evidence="1 2 3">Located in dense granules of tachyzoites. Upon infection, secreted to the PVM.</text>
</comment>
<comment type="domain">
    <text evidence="2">The KKXX motif functions as an ER retrieval signal that rationalizes association with PVM and the host cell ER.</text>
</comment>
<comment type="sequence caution" evidence="7">
    <conflict type="miscellaneous discrepancy">
        <sequence resource="EMBL-CDS" id="AAC13772"/>
    </conflict>
    <text>Chimeric cDNA, matches the N-terminus.</text>
</comment>
<comment type="sequence caution" evidence="7">
    <conflict type="erroneous initiation">
        <sequence resource="EMBL-CDS" id="AAC13773"/>
    </conflict>
    <text>Truncated N-terminus.</text>
</comment>
<comment type="sequence caution" evidence="7">
    <conflict type="miscellaneous discrepancy">
        <sequence resource="EMBL-CDS" id="AAC13773"/>
    </conflict>
    <text>Chimeric cDNA, matches the N-terminus.</text>
</comment>
<sequence>MDRTICPFFIQSFTMSTALKRLIPFLVPFVVFLVAAALGGLAADQPENHQALAEPVTGVGEAGVSPVNEAGESYSSATSGVQEATAPGAVLLDAIDAESDKVDNQAEGGERMKKVEEELSLLRRELYDRTDRPGLKRAVILSLATSAAIGGRMVSRTLRDNIPGYFVVINAILAAYYIRKVLTYRRRVMTKRQPFMSSVKNFFRRKPKDEGAGVDKASKKQT</sequence>
<gene>
    <name evidence="9" type="primary">GRA3</name>
    <name evidence="5" type="synonym">Tg556</name>
</gene>
<evidence type="ECO:0000255" key="1"/>
<evidence type="ECO:0000269" key="2">
    <source>
    </source>
</evidence>
<evidence type="ECO:0000269" key="3">
    <source>
    </source>
</evidence>
<evidence type="ECO:0000269" key="4">
    <source>
    </source>
</evidence>
<evidence type="ECO:0000303" key="5">
    <source>
    </source>
</evidence>
<evidence type="ECO:0000303" key="6">
    <source>
    </source>
</evidence>
<evidence type="ECO:0000305" key="7"/>
<evidence type="ECO:0000312" key="8">
    <source>
        <dbReference type="EMBL" id="AAN03693.1"/>
    </source>
</evidence>
<evidence type="ECO:0000312" key="9">
    <source>
        <dbReference type="EMBL" id="ABQ41276.1"/>
    </source>
</evidence>